<comment type="catalytic activity">
    <reaction>
        <text>an [RNA] containing cytidine + H2O = an [RNA]-3'-cytidine-3'-phosphate + a 5'-hydroxy-ribonucleotide-3'-[RNA].</text>
        <dbReference type="EC" id="4.6.1.18"/>
    </reaction>
</comment>
<comment type="catalytic activity">
    <reaction>
        <text>an [RNA] containing uridine + H2O = an [RNA]-3'-uridine-3'-phosphate + a 5'-hydroxy-ribonucleotide-3'-[RNA].</text>
        <dbReference type="EC" id="4.6.1.18"/>
    </reaction>
</comment>
<comment type="subcellular location">
    <subcellularLocation>
        <location evidence="2">Lysosome</location>
    </subcellularLocation>
</comment>
<comment type="similarity">
    <text evidence="2">Belongs to the pancreatic ribonuclease family.</text>
</comment>
<reference key="1">
    <citation type="journal article" date="1989" name="Biochemistry">
        <title>Primary structure of a ribonuclease from porcine liver, a new member of the ribonuclease superfamily.</title>
        <authorList>
            <person name="Hofsteenge J."/>
            <person name="Matthies R."/>
            <person name="Stone S.R."/>
        </authorList>
    </citation>
    <scope>PROTEIN SEQUENCE</scope>
    <source>
        <tissue>Liver</tissue>
    </source>
</reference>
<keyword id="KW-0903">Direct protein sequencing</keyword>
<keyword id="KW-0255">Endonuclease</keyword>
<keyword id="KW-0325">Glycoprotein</keyword>
<keyword id="KW-0378">Hydrolase</keyword>
<keyword id="KW-0456">Lyase</keyword>
<keyword id="KW-0458">Lysosome</keyword>
<keyword id="KW-0540">Nuclease</keyword>
<keyword id="KW-1185">Reference proteome</keyword>
<feature type="chain" id="PRO_0000057161" description="Ribonuclease PL1">
    <location>
        <begin position="1"/>
        <end position="34" status="greater than"/>
    </location>
</feature>
<feature type="active site" description="Proton acceptor" evidence="1">
    <location>
        <position position="15"/>
    </location>
</feature>
<feature type="glycosylation site" description="N-linked (GlcNAc...) asparagine; partial">
    <location>
        <position position="4"/>
    </location>
</feature>
<feature type="non-terminal residue">
    <location>
        <position position="34"/>
    </location>
</feature>
<evidence type="ECO:0000250" key="1"/>
<evidence type="ECO:0000305" key="2"/>
<sequence>IPKNLTRAQWFTIQHIQPSPLQXNKAMNGVNXYT</sequence>
<name>RNL1_PIG</name>
<dbReference type="EC" id="4.6.1.18"/>
<dbReference type="PIR" id="A33627">
    <property type="entry name" value="A33627"/>
</dbReference>
<dbReference type="GlyGen" id="P15466">
    <property type="glycosylation" value="1 site"/>
</dbReference>
<dbReference type="InParanoid" id="P15466"/>
<dbReference type="Proteomes" id="UP000008227">
    <property type="component" value="Unplaced"/>
</dbReference>
<dbReference type="Proteomes" id="UP000314985">
    <property type="component" value="Unplaced"/>
</dbReference>
<dbReference type="Proteomes" id="UP000694570">
    <property type="component" value="Unplaced"/>
</dbReference>
<dbReference type="Proteomes" id="UP000694571">
    <property type="component" value="Unplaced"/>
</dbReference>
<dbReference type="Proteomes" id="UP000694720">
    <property type="component" value="Unplaced"/>
</dbReference>
<dbReference type="Proteomes" id="UP000694722">
    <property type="component" value="Unplaced"/>
</dbReference>
<dbReference type="Proteomes" id="UP000694723">
    <property type="component" value="Unplaced"/>
</dbReference>
<dbReference type="Proteomes" id="UP000694724">
    <property type="component" value="Unplaced"/>
</dbReference>
<dbReference type="Proteomes" id="UP000694725">
    <property type="component" value="Unplaced"/>
</dbReference>
<dbReference type="Proteomes" id="UP000694726">
    <property type="component" value="Unplaced"/>
</dbReference>
<dbReference type="Proteomes" id="UP000694727">
    <property type="component" value="Unplaced"/>
</dbReference>
<dbReference type="Proteomes" id="UP000694728">
    <property type="component" value="Unplaced"/>
</dbReference>
<dbReference type="GO" id="GO:0005764">
    <property type="term" value="C:lysosome"/>
    <property type="evidence" value="ECO:0007669"/>
    <property type="project" value="UniProtKB-SubCell"/>
</dbReference>
<dbReference type="GO" id="GO:0016829">
    <property type="term" value="F:lyase activity"/>
    <property type="evidence" value="ECO:0007669"/>
    <property type="project" value="UniProtKB-KW"/>
</dbReference>
<dbReference type="GO" id="GO:0004522">
    <property type="term" value="F:ribonuclease A activity"/>
    <property type="evidence" value="ECO:0007669"/>
    <property type="project" value="UniProtKB-EC"/>
</dbReference>
<dbReference type="Gene3D" id="3.10.130.10">
    <property type="entry name" value="Ribonuclease A-like domain"/>
    <property type="match status" value="1"/>
</dbReference>
<dbReference type="InterPro" id="IPR036816">
    <property type="entry name" value="RNaseA-like_dom_sf"/>
</dbReference>
<organism>
    <name type="scientific">Sus scrofa</name>
    <name type="common">Pig</name>
    <dbReference type="NCBI Taxonomy" id="9823"/>
    <lineage>
        <taxon>Eukaryota</taxon>
        <taxon>Metazoa</taxon>
        <taxon>Chordata</taxon>
        <taxon>Craniata</taxon>
        <taxon>Vertebrata</taxon>
        <taxon>Euteleostomi</taxon>
        <taxon>Mammalia</taxon>
        <taxon>Eutheria</taxon>
        <taxon>Laurasiatheria</taxon>
        <taxon>Artiodactyla</taxon>
        <taxon>Suina</taxon>
        <taxon>Suidae</taxon>
        <taxon>Sus</taxon>
    </lineage>
</organism>
<protein>
    <recommendedName>
        <fullName>Ribonuclease PL1</fullName>
        <ecNumber>4.6.1.18</ecNumber>
    </recommendedName>
</protein>
<accession>P15466</accession>
<proteinExistence type="evidence at protein level"/>